<keyword id="KW-0479">Metal-binding</keyword>
<keyword id="KW-0521">NADP</keyword>
<keyword id="KW-0560">Oxidoreductase</keyword>
<keyword id="KW-0630">Potassium</keyword>
<reference key="1">
    <citation type="journal article" date="2008" name="DNA Res.">
        <title>Complete genome sequence and comparative analysis of the wild-type commensal Escherichia coli strain SE11 isolated from a healthy adult.</title>
        <authorList>
            <person name="Oshima K."/>
            <person name="Toh H."/>
            <person name="Ogura Y."/>
            <person name="Sasamoto H."/>
            <person name="Morita H."/>
            <person name="Park S.-H."/>
            <person name="Ooka T."/>
            <person name="Iyoda S."/>
            <person name="Taylor T.D."/>
            <person name="Hayashi T."/>
            <person name="Itoh K."/>
            <person name="Hattori M."/>
        </authorList>
    </citation>
    <scope>NUCLEOTIDE SEQUENCE [LARGE SCALE GENOMIC DNA]</scope>
    <source>
        <strain>SE11</strain>
    </source>
</reference>
<proteinExistence type="inferred from homology"/>
<sequence>MRIEEDLKLGFKDVLIRPKRSTLKSRSDVELERQFTFKHSGQSWSGVPIIAANMDTVGTFSMASALASFDILTAVHKHYSVEEWQAFINNSSADVLKHVMVSTGTSDADFEKTKQILDLNPALNFVCIDVANGYSEHFVQFVAKAREAWPTKTICAGNVVTGEMCEELILSGADIVKVGIGPGSVCTTRVKTGVGYPQLSAVIECADAAHGLGGMIVSDGGCTTPGDVAKAFGGGADFVMLGGMLAGHEESGGRIVEENGEKFMLFYGMSSESAMKRHVGGVAEYRAAEGKTVKLPLRGPVENTARDILGGLRSACTYVGASRLKELTKRTTFIRVQEQENRIFNNL</sequence>
<accession>B6HZ81</accession>
<comment type="function">
    <text evidence="1">Catalyzes the irreversible NADPH-dependent deamination of GMP to IMP. It functions in the conversion of nucleobase, nucleoside and nucleotide derivatives of G to A nucleotides, and in maintaining the intracellular balance of A and G nucleotides.</text>
</comment>
<comment type="catalytic activity">
    <reaction evidence="1">
        <text>IMP + NH4(+) + NADP(+) = GMP + NADPH + 2 H(+)</text>
        <dbReference type="Rhea" id="RHEA:17185"/>
        <dbReference type="ChEBI" id="CHEBI:15378"/>
        <dbReference type="ChEBI" id="CHEBI:28938"/>
        <dbReference type="ChEBI" id="CHEBI:57783"/>
        <dbReference type="ChEBI" id="CHEBI:58053"/>
        <dbReference type="ChEBI" id="CHEBI:58115"/>
        <dbReference type="ChEBI" id="CHEBI:58349"/>
        <dbReference type="EC" id="1.7.1.7"/>
    </reaction>
</comment>
<comment type="subunit">
    <text evidence="1">Homotetramer.</text>
</comment>
<comment type="similarity">
    <text evidence="1">Belongs to the IMPDH/GMPR family. GuaC type 1 subfamily.</text>
</comment>
<feature type="chain" id="PRO_1000129856" description="GMP reductase">
    <location>
        <begin position="1"/>
        <end position="347"/>
    </location>
</feature>
<feature type="active site" description="Thioimidate intermediate" evidence="1">
    <location>
        <position position="186"/>
    </location>
</feature>
<feature type="binding site" evidence="1">
    <location>
        <begin position="108"/>
        <end position="131"/>
    </location>
    <ligand>
        <name>NADP(+)</name>
        <dbReference type="ChEBI" id="CHEBI:58349"/>
    </ligand>
</feature>
<feature type="binding site" evidence="1">
    <location>
        <position position="181"/>
    </location>
    <ligand>
        <name>K(+)</name>
        <dbReference type="ChEBI" id="CHEBI:29103"/>
    </ligand>
</feature>
<feature type="binding site" evidence="1">
    <location>
        <position position="183"/>
    </location>
    <ligand>
        <name>K(+)</name>
        <dbReference type="ChEBI" id="CHEBI:29103"/>
    </ligand>
</feature>
<feature type="binding site" evidence="1">
    <location>
        <begin position="216"/>
        <end position="239"/>
    </location>
    <ligand>
        <name>NADP(+)</name>
        <dbReference type="ChEBI" id="CHEBI:58349"/>
    </ligand>
</feature>
<protein>
    <recommendedName>
        <fullName evidence="1">GMP reductase</fullName>
        <ecNumber evidence="1">1.7.1.7</ecNumber>
    </recommendedName>
    <alternativeName>
        <fullName evidence="1">Guanosine 5'-monophosphate oxidoreductase</fullName>
        <shortName evidence="1">Guanosine monophosphate reductase</shortName>
    </alternativeName>
</protein>
<gene>
    <name evidence="1" type="primary">guaC</name>
    <name type="ordered locus">ECSE_0105</name>
</gene>
<name>GUAC_ECOSE</name>
<organism>
    <name type="scientific">Escherichia coli (strain SE11)</name>
    <dbReference type="NCBI Taxonomy" id="409438"/>
    <lineage>
        <taxon>Bacteria</taxon>
        <taxon>Pseudomonadati</taxon>
        <taxon>Pseudomonadota</taxon>
        <taxon>Gammaproteobacteria</taxon>
        <taxon>Enterobacterales</taxon>
        <taxon>Enterobacteriaceae</taxon>
        <taxon>Escherichia</taxon>
    </lineage>
</organism>
<evidence type="ECO:0000255" key="1">
    <source>
        <dbReference type="HAMAP-Rule" id="MF_00596"/>
    </source>
</evidence>
<dbReference type="EC" id="1.7.1.7" evidence="1"/>
<dbReference type="EMBL" id="AP009240">
    <property type="protein sequence ID" value="BAG75629.1"/>
    <property type="molecule type" value="Genomic_DNA"/>
</dbReference>
<dbReference type="RefSeq" id="WP_001217338.1">
    <property type="nucleotide sequence ID" value="NC_011415.1"/>
</dbReference>
<dbReference type="SMR" id="B6HZ81"/>
<dbReference type="GeneID" id="93777331"/>
<dbReference type="KEGG" id="ecy:ECSE_0105"/>
<dbReference type="HOGENOM" id="CLU_022552_5_3_6"/>
<dbReference type="Proteomes" id="UP000008199">
    <property type="component" value="Chromosome"/>
</dbReference>
<dbReference type="GO" id="GO:0005829">
    <property type="term" value="C:cytosol"/>
    <property type="evidence" value="ECO:0007669"/>
    <property type="project" value="TreeGrafter"/>
</dbReference>
<dbReference type="GO" id="GO:1902560">
    <property type="term" value="C:GMP reductase complex"/>
    <property type="evidence" value="ECO:0007669"/>
    <property type="project" value="InterPro"/>
</dbReference>
<dbReference type="GO" id="GO:0003920">
    <property type="term" value="F:GMP reductase activity"/>
    <property type="evidence" value="ECO:0007669"/>
    <property type="project" value="UniProtKB-UniRule"/>
</dbReference>
<dbReference type="GO" id="GO:0046872">
    <property type="term" value="F:metal ion binding"/>
    <property type="evidence" value="ECO:0007669"/>
    <property type="project" value="UniProtKB-KW"/>
</dbReference>
<dbReference type="GO" id="GO:0006163">
    <property type="term" value="P:purine nucleotide metabolic process"/>
    <property type="evidence" value="ECO:0007669"/>
    <property type="project" value="UniProtKB-UniRule"/>
</dbReference>
<dbReference type="CDD" id="cd00381">
    <property type="entry name" value="IMPDH"/>
    <property type="match status" value="1"/>
</dbReference>
<dbReference type="FunFam" id="3.20.20.70:FF:000012">
    <property type="entry name" value="GMP reductase"/>
    <property type="match status" value="1"/>
</dbReference>
<dbReference type="Gene3D" id="3.20.20.70">
    <property type="entry name" value="Aldolase class I"/>
    <property type="match status" value="1"/>
</dbReference>
<dbReference type="HAMAP" id="MF_00596">
    <property type="entry name" value="GMP_reduct_type1"/>
    <property type="match status" value="1"/>
</dbReference>
<dbReference type="InterPro" id="IPR013785">
    <property type="entry name" value="Aldolase_TIM"/>
</dbReference>
<dbReference type="InterPro" id="IPR050139">
    <property type="entry name" value="GMP_reductase"/>
</dbReference>
<dbReference type="InterPro" id="IPR005993">
    <property type="entry name" value="GMPR"/>
</dbReference>
<dbReference type="InterPro" id="IPR015875">
    <property type="entry name" value="IMP_DH/GMP_Rdtase_CS"/>
</dbReference>
<dbReference type="InterPro" id="IPR001093">
    <property type="entry name" value="IMP_DH_GMPRt"/>
</dbReference>
<dbReference type="NCBIfam" id="TIGR01305">
    <property type="entry name" value="GMP_reduct_1"/>
    <property type="match status" value="1"/>
</dbReference>
<dbReference type="NCBIfam" id="NF003470">
    <property type="entry name" value="PRK05096.1"/>
    <property type="match status" value="1"/>
</dbReference>
<dbReference type="PANTHER" id="PTHR43170">
    <property type="entry name" value="GMP REDUCTASE"/>
    <property type="match status" value="1"/>
</dbReference>
<dbReference type="PANTHER" id="PTHR43170:SF5">
    <property type="entry name" value="GMP REDUCTASE"/>
    <property type="match status" value="1"/>
</dbReference>
<dbReference type="Pfam" id="PF00478">
    <property type="entry name" value="IMPDH"/>
    <property type="match status" value="1"/>
</dbReference>
<dbReference type="PIRSF" id="PIRSF000235">
    <property type="entry name" value="GMP_reductase"/>
    <property type="match status" value="1"/>
</dbReference>
<dbReference type="SMART" id="SM01240">
    <property type="entry name" value="IMPDH"/>
    <property type="match status" value="1"/>
</dbReference>
<dbReference type="SUPFAM" id="SSF51412">
    <property type="entry name" value="Inosine monophosphate dehydrogenase (IMPDH)"/>
    <property type="match status" value="1"/>
</dbReference>
<dbReference type="PROSITE" id="PS00487">
    <property type="entry name" value="IMP_DH_GMP_RED"/>
    <property type="match status" value="1"/>
</dbReference>